<sequence>MIKKASLLTACSVTAFSAWAQDTSPDTLVVTAIRFEQPRSTVLAPTTVVTRQDIDRWQSTSVNDVLRRLPGVDITQNGGSGQLSSIFIRGTNASHVLVLIDGVRLNLAGVSGSADLSQFPIALVQRIEYIRGPRSAVYGSDAIGGVVNIITTRDEPGTEISAGWGSNSYQNYDVSTQQQLGDKTRVTLLGDYAHTHGYDVVAYGNTGTQAQTDNDGFLSKTLYGALEHNFTDAWSGFVRGYGYDNRTNYDAYYSPGSPLLDTRKLYSQSWDAGLRYNGELIKSQLITSYSHSKDYNYDPHYGRYDSSATLDEMKQYTVQWANNVIVGHGSIGAGVDWQKQTTTPGTGYVEDGYDQRNTGIYLTGLQQVGDFTFEGAARSDDNSQFGRHGTWQTSAGWEFIEGYRFIASYGTSYKAPNLGQLYGFYGNPNLDPEKSKQWEGAFEGLTAGVNWRISGYRNDVSDLIYYDDHTLKYYNEGKARIKGVEATANFDTGPLTHTVSYDYVDARNAITDTPLLRRAKQQVKYQLDWQLYDFDWGITYQYLGTRYDKDYSSYPYQTVKMGGVSLWDLAVAYPVTSHLTVRGKIANLFDKDYETVYGYQTAGREYTLSGSYTF</sequence>
<feature type="signal peptide" evidence="1">
    <location>
        <begin position="1"/>
        <end position="20"/>
    </location>
</feature>
<feature type="chain" id="PRO_0000292761" description="Vitamin B12 transporter BtuB">
    <location>
        <begin position="21"/>
        <end position="614"/>
    </location>
</feature>
<feature type="transmembrane region" description="Beta stranded" evidence="1">
    <location>
        <begin position="158"/>
        <end position="165"/>
    </location>
</feature>
<feature type="transmembrane region" description="Beta stranded" evidence="1">
    <location>
        <begin position="169"/>
        <end position="178"/>
    </location>
</feature>
<feature type="transmembrane region" description="Beta stranded" evidence="1">
    <location>
        <begin position="184"/>
        <end position="195"/>
    </location>
</feature>
<feature type="transmembrane region" description="Beta stranded" evidence="1">
    <location>
        <begin position="217"/>
        <end position="227"/>
    </location>
</feature>
<feature type="transmembrane region" description="Beta stranded" evidence="1">
    <location>
        <begin position="232"/>
        <end position="248"/>
    </location>
</feature>
<feature type="transmembrane region" description="Beta stranded" evidence="1">
    <location>
        <begin position="263"/>
        <end position="277"/>
    </location>
</feature>
<feature type="transmembrane region" description="Beta stranded" evidence="1">
    <location>
        <begin position="279"/>
        <end position="296"/>
    </location>
</feature>
<feature type="transmembrane region" description="Beta stranded" evidence="1">
    <location>
        <begin position="309"/>
        <end position="325"/>
    </location>
</feature>
<feature type="transmembrane region" description="Beta stranded" evidence="1">
    <location>
        <begin position="328"/>
        <end position="337"/>
    </location>
</feature>
<feature type="transmembrane region" description="Beta stranded" evidence="1">
    <location>
        <begin position="353"/>
        <end position="369"/>
    </location>
</feature>
<feature type="transmembrane region" description="Beta stranded" evidence="1">
    <location>
        <begin position="371"/>
        <end position="381"/>
    </location>
</feature>
<feature type="transmembrane region" description="Beta stranded" evidence="1">
    <location>
        <begin position="385"/>
        <end position="400"/>
    </location>
</feature>
<feature type="transmembrane region" description="Beta stranded" evidence="1">
    <location>
        <begin position="403"/>
        <end position="417"/>
    </location>
</feature>
<feature type="transmembrane region" description="Beta stranded" evidence="1">
    <location>
        <begin position="434"/>
        <end position="443"/>
    </location>
</feature>
<feature type="transmembrane region" description="Beta stranded" evidence="1">
    <location>
        <begin position="449"/>
        <end position="458"/>
    </location>
</feature>
<feature type="transmembrane region" description="Beta stranded" evidence="1">
    <location>
        <begin position="473"/>
        <end position="490"/>
    </location>
</feature>
<feature type="transmembrane region" description="Beta stranded" evidence="1">
    <location>
        <begin position="494"/>
        <end position="509"/>
    </location>
</feature>
<feature type="transmembrane region" description="Beta stranded" evidence="1">
    <location>
        <begin position="517"/>
        <end position="529"/>
    </location>
</feature>
<feature type="transmembrane region" description="Beta stranded" evidence="1">
    <location>
        <begin position="535"/>
        <end position="550"/>
    </location>
</feature>
<feature type="transmembrane region" description="Beta stranded" evidence="1">
    <location>
        <begin position="558"/>
        <end position="572"/>
    </location>
</feature>
<feature type="transmembrane region" description="Beta stranded" evidence="1">
    <location>
        <begin position="585"/>
        <end position="596"/>
    </location>
</feature>
<feature type="transmembrane region" description="Beta stranded" evidence="1">
    <location>
        <begin position="602"/>
        <end position="614"/>
    </location>
</feature>
<feature type="domain" description="TBDR plug" evidence="2">
    <location>
        <begin position="38"/>
        <end position="152"/>
    </location>
</feature>
<feature type="domain" description="TBDR beta-barrel" evidence="2">
    <location>
        <begin position="155"/>
        <end position="614"/>
    </location>
</feature>
<feature type="short sequence motif" description="TonB box">
    <location>
        <begin position="26"/>
        <end position="33"/>
    </location>
</feature>
<feature type="short sequence motif" description="TonB C-terminal box">
    <location>
        <begin position="597"/>
        <end position="614"/>
    </location>
</feature>
<feature type="binding site" evidence="1">
    <location>
        <position position="83"/>
    </location>
    <ligand>
        <name>cyanocob(III)alamin</name>
        <dbReference type="ChEBI" id="CHEBI:17439"/>
    </ligand>
</feature>
<feature type="binding site" evidence="1">
    <location>
        <position position="85"/>
    </location>
    <ligand>
        <name>cyanocob(III)alamin</name>
        <dbReference type="ChEBI" id="CHEBI:17439"/>
    </ligand>
</feature>
<feature type="binding site" evidence="1">
    <location>
        <position position="92"/>
    </location>
    <ligand>
        <name>cyanocob(III)alamin</name>
        <dbReference type="ChEBI" id="CHEBI:17439"/>
    </ligand>
</feature>
<feature type="binding site" evidence="1">
    <location>
        <begin position="110"/>
        <end position="111"/>
    </location>
    <ligand>
        <name>cyanocob(III)alamin</name>
        <dbReference type="ChEBI" id="CHEBI:17439"/>
    </ligand>
</feature>
<feature type="binding site" evidence="1">
    <location>
        <position position="199"/>
    </location>
    <ligand>
        <name>Ca(2+)</name>
        <dbReference type="ChEBI" id="CHEBI:29108"/>
        <label>1</label>
    </ligand>
</feature>
<feature type="binding site" evidence="1">
    <location>
        <position position="211"/>
    </location>
    <ligand>
        <name>Ca(2+)</name>
        <dbReference type="ChEBI" id="CHEBI:29108"/>
        <label>1</label>
    </ligand>
</feature>
<feature type="binding site" evidence="1">
    <location>
        <position position="213"/>
    </location>
    <ligand>
        <name>Ca(2+)</name>
        <dbReference type="ChEBI" id="CHEBI:29108"/>
        <label>1</label>
    </ligand>
</feature>
<feature type="binding site" evidence="1">
    <location>
        <position position="213"/>
    </location>
    <ligand>
        <name>Ca(2+)</name>
        <dbReference type="ChEBI" id="CHEBI:29108"/>
        <label>2</label>
    </ligand>
</feature>
<feature type="binding site" evidence="1">
    <location>
        <position position="215"/>
    </location>
    <ligand>
        <name>Ca(2+)</name>
        <dbReference type="ChEBI" id="CHEBI:29108"/>
        <label>1</label>
    </ligand>
</feature>
<feature type="binding site" evidence="1">
    <location>
        <position position="215"/>
    </location>
    <ligand>
        <name>Ca(2+)</name>
        <dbReference type="ChEBI" id="CHEBI:29108"/>
        <label>2</label>
    </ligand>
</feature>
<feature type="binding site" evidence="1">
    <location>
        <position position="249"/>
    </location>
    <ligand>
        <name>Ca(2+)</name>
        <dbReference type="ChEBI" id="CHEBI:29108"/>
        <label>2</label>
    </ligand>
</feature>
<feature type="binding site" evidence="1">
    <location>
        <position position="250"/>
    </location>
    <ligand>
        <name>Ca(2+)</name>
        <dbReference type="ChEBI" id="CHEBI:29108"/>
        <label>1</label>
    </ligand>
</feature>
<feature type="binding site" evidence="1">
    <location>
        <position position="250"/>
    </location>
    <ligand>
        <name>Ca(2+)</name>
        <dbReference type="ChEBI" id="CHEBI:29108"/>
        <label>2</label>
    </ligand>
</feature>
<feature type="binding site" evidence="1">
    <location>
        <position position="251"/>
    </location>
    <ligand>
        <name>cyanocob(III)alamin</name>
        <dbReference type="ChEBI" id="CHEBI:17439"/>
    </ligand>
</feature>
<feature type="binding site" evidence="1">
    <location>
        <position position="261"/>
    </location>
    <ligand>
        <name>Ca(2+)</name>
        <dbReference type="ChEBI" id="CHEBI:29108"/>
        <label>2</label>
    </ligand>
</feature>
<feature type="binding site" evidence="1">
    <location>
        <position position="309"/>
    </location>
    <ligand>
        <name>cyanocob(III)alamin</name>
        <dbReference type="ChEBI" id="CHEBI:17439"/>
    </ligand>
</feature>
<feature type="binding site" evidence="1">
    <location>
        <position position="517"/>
    </location>
    <ligand>
        <name>cyanocob(III)alamin</name>
        <dbReference type="ChEBI" id="CHEBI:17439"/>
    </ligand>
</feature>
<feature type="binding site" evidence="1">
    <location>
        <position position="551"/>
    </location>
    <ligand>
        <name>cyanocob(III)alamin</name>
        <dbReference type="ChEBI" id="CHEBI:17439"/>
    </ligand>
</feature>
<protein>
    <recommendedName>
        <fullName evidence="1">Vitamin B12 transporter BtuB</fullName>
    </recommendedName>
    <alternativeName>
        <fullName evidence="1">Cobalamin receptor</fullName>
    </alternativeName>
    <alternativeName>
        <fullName evidence="1">Outer membrane cobalamin translocator</fullName>
    </alternativeName>
</protein>
<accession>Q0SY25</accession>
<evidence type="ECO:0000255" key="1">
    <source>
        <dbReference type="HAMAP-Rule" id="MF_01531"/>
    </source>
</evidence>
<evidence type="ECO:0000255" key="2">
    <source>
        <dbReference type="PROSITE-ProRule" id="PRU01360"/>
    </source>
</evidence>
<evidence type="ECO:0000305" key="3"/>
<proteinExistence type="inferred from homology"/>
<name>BTUB_SHIF8</name>
<organism>
    <name type="scientific">Shigella flexneri serotype 5b (strain 8401)</name>
    <dbReference type="NCBI Taxonomy" id="373384"/>
    <lineage>
        <taxon>Bacteria</taxon>
        <taxon>Pseudomonadati</taxon>
        <taxon>Pseudomonadota</taxon>
        <taxon>Gammaproteobacteria</taxon>
        <taxon>Enterobacterales</taxon>
        <taxon>Enterobacteriaceae</taxon>
        <taxon>Shigella</taxon>
    </lineage>
</organism>
<keyword id="KW-0106">Calcium</keyword>
<keyword id="KW-0998">Cell outer membrane</keyword>
<keyword id="KW-0406">Ion transport</keyword>
<keyword id="KW-0472">Membrane</keyword>
<keyword id="KW-0479">Metal-binding</keyword>
<keyword id="KW-0626">Porin</keyword>
<keyword id="KW-0732">Signal</keyword>
<keyword id="KW-0798">TonB box</keyword>
<keyword id="KW-0812">Transmembrane</keyword>
<keyword id="KW-1134">Transmembrane beta strand</keyword>
<keyword id="KW-0813">Transport</keyword>
<reference key="1">
    <citation type="journal article" date="2006" name="BMC Genomics">
        <title>Complete genome sequence of Shigella flexneri 5b and comparison with Shigella flexneri 2a.</title>
        <authorList>
            <person name="Nie H."/>
            <person name="Yang F."/>
            <person name="Zhang X."/>
            <person name="Yang J."/>
            <person name="Chen L."/>
            <person name="Wang J."/>
            <person name="Xiong Z."/>
            <person name="Peng J."/>
            <person name="Sun L."/>
            <person name="Dong J."/>
            <person name="Xue Y."/>
            <person name="Xu X."/>
            <person name="Chen S."/>
            <person name="Yao Z."/>
            <person name="Shen Y."/>
            <person name="Jin Q."/>
        </authorList>
    </citation>
    <scope>NUCLEOTIDE SEQUENCE [LARGE SCALE GENOMIC DNA]</scope>
    <source>
        <strain>8401</strain>
    </source>
</reference>
<comment type="function">
    <text evidence="1">Involved in the active translocation of vitamin B12 (cyanocobalamin) across the outer membrane to the periplasmic space. It derives its energy for transport by interacting with the trans-periplasmic membrane protein TonB.</text>
</comment>
<comment type="subcellular location">
    <subcellularLocation>
        <location evidence="1">Cell outer membrane</location>
        <topology evidence="1">Multi-pass membrane protein</topology>
    </subcellularLocation>
</comment>
<comment type="similarity">
    <text evidence="1">Belongs to the TonB-dependent receptor family. BtuB (TC 1.B.14.3.1) subfamily.</text>
</comment>
<comment type="sequence caution" evidence="3">
    <conflict type="erroneous initiation">
        <sequence resource="EMBL-CDS" id="ABF06040"/>
    </conflict>
</comment>
<gene>
    <name evidence="1" type="primary">btuB</name>
    <name type="ordered locus">SFV_4039</name>
</gene>
<dbReference type="EMBL" id="CP000266">
    <property type="protein sequence ID" value="ABF06040.1"/>
    <property type="status" value="ALT_INIT"/>
    <property type="molecule type" value="Genomic_DNA"/>
</dbReference>
<dbReference type="RefSeq" id="WP_000591338.1">
    <property type="nucleotide sequence ID" value="NC_008258.1"/>
</dbReference>
<dbReference type="SMR" id="Q0SY25"/>
<dbReference type="KEGG" id="sfv:SFV_4039"/>
<dbReference type="HOGENOM" id="CLU_008287_18_5_6"/>
<dbReference type="Proteomes" id="UP000000659">
    <property type="component" value="Chromosome"/>
</dbReference>
<dbReference type="GO" id="GO:0009279">
    <property type="term" value="C:cell outer membrane"/>
    <property type="evidence" value="ECO:0007669"/>
    <property type="project" value="UniProtKB-SubCell"/>
</dbReference>
<dbReference type="GO" id="GO:0046930">
    <property type="term" value="C:pore complex"/>
    <property type="evidence" value="ECO:0007669"/>
    <property type="project" value="UniProtKB-KW"/>
</dbReference>
<dbReference type="GO" id="GO:0015420">
    <property type="term" value="F:ABC-type vitamin B12 transporter activity"/>
    <property type="evidence" value="ECO:0007669"/>
    <property type="project" value="InterPro"/>
</dbReference>
<dbReference type="GO" id="GO:0046872">
    <property type="term" value="F:metal ion binding"/>
    <property type="evidence" value="ECO:0007669"/>
    <property type="project" value="UniProtKB-KW"/>
</dbReference>
<dbReference type="GO" id="GO:0015288">
    <property type="term" value="F:porin activity"/>
    <property type="evidence" value="ECO:0007669"/>
    <property type="project" value="UniProtKB-KW"/>
</dbReference>
<dbReference type="GO" id="GO:0006811">
    <property type="term" value="P:monoatomic ion transport"/>
    <property type="evidence" value="ECO:0007669"/>
    <property type="project" value="UniProtKB-KW"/>
</dbReference>
<dbReference type="CDD" id="cd01347">
    <property type="entry name" value="ligand_gated_channel"/>
    <property type="match status" value="1"/>
</dbReference>
<dbReference type="FunFam" id="2.170.130.10:FF:000002">
    <property type="entry name" value="Vitamin B12 transporter BtuB"/>
    <property type="match status" value="1"/>
</dbReference>
<dbReference type="FunFam" id="2.40.170.20:FF:000001">
    <property type="entry name" value="Vitamin B12 transporter BtuB"/>
    <property type="match status" value="1"/>
</dbReference>
<dbReference type="Gene3D" id="2.40.170.20">
    <property type="entry name" value="TonB-dependent receptor, beta-barrel domain"/>
    <property type="match status" value="1"/>
</dbReference>
<dbReference type="Gene3D" id="2.170.130.10">
    <property type="entry name" value="TonB-dependent receptor, plug domain"/>
    <property type="match status" value="1"/>
</dbReference>
<dbReference type="HAMAP" id="MF_01531">
    <property type="entry name" value="BtuB"/>
    <property type="match status" value="1"/>
</dbReference>
<dbReference type="InterPro" id="IPR010101">
    <property type="entry name" value="B12_transptr_BtuB"/>
</dbReference>
<dbReference type="InterPro" id="IPR012910">
    <property type="entry name" value="Plug_dom"/>
</dbReference>
<dbReference type="InterPro" id="IPR037066">
    <property type="entry name" value="Plug_dom_sf"/>
</dbReference>
<dbReference type="InterPro" id="IPR039426">
    <property type="entry name" value="TonB-dep_rcpt-like"/>
</dbReference>
<dbReference type="InterPro" id="IPR000531">
    <property type="entry name" value="TonB-dep_rcpt_b-brl"/>
</dbReference>
<dbReference type="InterPro" id="IPR036942">
    <property type="entry name" value="TonB_rcpt_b-brl_sf"/>
</dbReference>
<dbReference type="InterPro" id="IPR010917">
    <property type="entry name" value="TonB_rcpt_CS"/>
</dbReference>
<dbReference type="NCBIfam" id="NF007926">
    <property type="entry name" value="PRK10641.1"/>
    <property type="match status" value="1"/>
</dbReference>
<dbReference type="NCBIfam" id="TIGR01779">
    <property type="entry name" value="TonB-B12"/>
    <property type="match status" value="1"/>
</dbReference>
<dbReference type="PANTHER" id="PTHR30069:SF53">
    <property type="entry name" value="COLICIN I RECEPTOR-RELATED"/>
    <property type="match status" value="1"/>
</dbReference>
<dbReference type="PANTHER" id="PTHR30069">
    <property type="entry name" value="TONB-DEPENDENT OUTER MEMBRANE RECEPTOR"/>
    <property type="match status" value="1"/>
</dbReference>
<dbReference type="Pfam" id="PF07715">
    <property type="entry name" value="Plug"/>
    <property type="match status" value="1"/>
</dbReference>
<dbReference type="Pfam" id="PF00593">
    <property type="entry name" value="TonB_dep_Rec_b-barrel"/>
    <property type="match status" value="1"/>
</dbReference>
<dbReference type="SUPFAM" id="SSF56935">
    <property type="entry name" value="Porins"/>
    <property type="match status" value="1"/>
</dbReference>
<dbReference type="PROSITE" id="PS01156">
    <property type="entry name" value="TONB_DEPENDENT_REC_2"/>
    <property type="match status" value="1"/>
</dbReference>
<dbReference type="PROSITE" id="PS52016">
    <property type="entry name" value="TONB_DEPENDENT_REC_3"/>
    <property type="match status" value="1"/>
</dbReference>